<comment type="function">
    <text evidence="1">Capsid protein self-assembles to form an icosahedral capsid with a T=27 symmetry, about 120 nm in diameter, and consisting of 1560 capsid proteins. The capsid encapsulates the genomic DNA (PubMed:16081102). The 12 pentameric vertices of the capsid are occupied by other proteins (PubMed:16081102).</text>
</comment>
<comment type="subunit">
    <text evidence="1">Homohexmer.</text>
</comment>
<comment type="subcellular location">
    <subcellularLocation>
        <location>Virion</location>
    </subcellularLocation>
    <text evidence="1">Capsid protein.</text>
</comment>
<comment type="PTM">
    <text evidence="2">Cleaved by the capsid maturation protease during capsid maturation.</text>
</comment>
<evidence type="ECO:0000269" key="1">
    <source>
    </source>
</evidence>
<evidence type="ECO:0000269" key="2">
    <source>
    </source>
</evidence>
<evidence type="ECO:0000303" key="3">
    <source>
    </source>
</evidence>
<organism>
    <name type="scientific">Pseudomonas phage phiKZ</name>
    <dbReference type="NCBI Taxonomy" id="2905945"/>
    <lineage>
        <taxon>Viruses</taxon>
        <taxon>Duplodnaviria</taxon>
        <taxon>Heunggongvirae</taxon>
        <taxon>Uroviricota</taxon>
        <taxon>Caudoviricetes</taxon>
        <taxon>Phikzvirus</taxon>
        <taxon>Phikzvirus phiKZ</taxon>
    </lineage>
</organism>
<organismHost>
    <name type="scientific">Pseudomonas aeruginosa</name>
    <dbReference type="NCBI Taxonomy" id="287"/>
</organismHost>
<name>CAPSD_BPDPK</name>
<accession>Q8SD42</accession>
<sequence>MSVHALRELFKHKGEKNYEVFSMEDFIGRLESEIGLNDSVVSQGRSLISSISHENFGTVQATDIQDAAAIYNKMQMLVNDYGFERVSSSDPQVRAREERVRENQITAATMAAIACADETKYIRALRGITKAKASNEDHVKVVQHQFNGPAGGIQVFENGVGLENYNEKSQRDFRVVTIGYNLAASRQDEFAERIYPTTVINPIEGGVVQVLPYIAVMKDVYHEVSGVKMDNEEVNMVEAYRDPSILDDESIALIPALDPAGSNADFFVDPALVPPYTIKNEQNLTITTAPLKANVRLDLMGNSNANLLIQRGMLEVSDTIDPAGRLKNLFVLLGGKVVKFKVDRLPRAVFQPDLVGDTRNAVIRFDSDDLVVSGDTTFIDGSADGVINDLKTAKLSLRLSVGFGGTISLSKGDSKFGATDTYVDKVLNEDGQVMDNADPAVKAILDQLTDLAVIGFELDTRFTNTNRRQRGHLLQTRALQFRHPIPMHAPVTLPMDTMTDEGPGEVVKALTVNTNIRNSNNAVKRMLNYLAQLREVVHNGYNRPKFGIIEGALSAVMRPTYRYKELDLEKVIDTIKSKDRWDDVCAAILNCVKAELFPAHRDSNIEAAFRVISGNQDETPMYLFCSDKEIANYLMTKGDDRTLGAYLKYDIVSTNNQLFDGKLVVIPTRAVQQENDILSWGQFFYVSTVIADLPITRGGHQVTREIAAIPFNLHVNNIPFALEFKITGFQKVMGETQFNGKLADLKP</sequence>
<feature type="chain" id="PRO_0000460650" description="Major capsid protein">
    <location>
        <begin position="1"/>
        <end position="747"/>
    </location>
</feature>
<feature type="site" description="Cleavage; by the viral capsid maturation protease" evidence="2">
    <location>
        <begin position="24"/>
        <end position="25"/>
    </location>
</feature>
<feature type="site" description="Cleavage; by the viral capsid maturation protease" evidence="2">
    <location>
        <begin position="54"/>
        <end position="55"/>
    </location>
</feature>
<feature type="site" description="Cleavage; by the viral capsid maturation protease" evidence="2">
    <location>
        <begin position="84"/>
        <end position="85"/>
    </location>
</feature>
<feature type="site" description="Cleavage; by the viral capsid maturation protease" evidence="2">
    <location>
        <begin position="97"/>
        <end position="98"/>
    </location>
</feature>
<feature type="site" description="Cleavage; by the viral capsid maturation protease" evidence="2">
    <location>
        <begin position="118"/>
        <end position="119"/>
    </location>
</feature>
<feature type="site" description="Cleavage; by the viral capsid maturation protease" evidence="2">
    <location>
        <begin position="136"/>
        <end position="137"/>
    </location>
</feature>
<feature type="site" description="Cleavage; by the viral capsid maturation protease" evidence="2">
    <location>
        <begin position="163"/>
        <end position="164"/>
    </location>
</feature>
<reference key="1">
    <citation type="journal article" date="2002" name="J. Mol. Biol.">
        <title>The genome of bacteriophage phiKZ of Pseudomonas aeruginosa.</title>
        <authorList>
            <person name="Mesyanzhinov V.V."/>
            <person name="Robben J."/>
            <person name="Grymonprez B."/>
            <person name="Kostyuchenko V.A."/>
            <person name="Bourkaltseva M.V."/>
            <person name="Sykilinda N.N."/>
            <person name="Krylov V.N."/>
            <person name="Volckaert G."/>
        </authorList>
    </citation>
    <scope>NUCLEOTIDE SEQUENCE [GENOMIC DNA]</scope>
</reference>
<reference key="2">
    <citation type="journal article" date="2012" name="Mol. Microbiol.">
        <title>Extensive proteolysis of head and inner body proteins by a morphogenetic protease in the giant Pseudomonas aeruginosa phage phiKZ.</title>
        <authorList>
            <person name="Thomas J.A."/>
            <person name="Weintraub S.T."/>
            <person name="Wu W."/>
            <person name="Winkler D.C."/>
            <person name="Cheng N."/>
            <person name="Steven A.C."/>
            <person name="Black L.W."/>
        </authorList>
    </citation>
    <scope>PROTEOLYTIC CLEAVAGE</scope>
</reference>
<reference key="3">
    <citation type="journal article" date="2005" name="J. Mol. Biol.">
        <title>A three-dimensional cryo-electron microscopy structure of the bacteriophage phiKZ head.</title>
        <authorList>
            <person name="Fokine A."/>
            <person name="Kostyuchenko V.A."/>
            <person name="Efimov A.V."/>
            <person name="Kurochkina L.P."/>
            <person name="Sykilinda N.N."/>
            <person name="Robben J."/>
            <person name="Volckaert G."/>
            <person name="Hoenger A."/>
            <person name="Chipman P.R."/>
            <person name="Battisti A.J."/>
            <person name="Rossmann M.G."/>
            <person name="Mesyanzhinov V.V."/>
        </authorList>
    </citation>
    <scope>STRUCTURE BY ELECTRON MICROSCOPY (X.X ANGSTROMS) OF THE CAPSID</scope>
    <scope>FUNCTION</scope>
    <scope>SUBUNIT</scope>
    <scope>SUBCELLULAR LOCATION</scope>
</reference>
<protein>
    <recommendedName>
        <fullName>Major capsid protein</fullName>
    </recommendedName>
    <alternativeName>
        <fullName evidence="3">Gp120</fullName>
    </alternativeName>
</protein>
<keyword id="KW-0002">3D-structure</keyword>
<keyword id="KW-0167">Capsid protein</keyword>
<keyword id="KW-1185">Reference proteome</keyword>
<keyword id="KW-0946">Virion</keyword>
<dbReference type="EMBL" id="AF399011">
    <property type="protein sequence ID" value="AAL83021.1"/>
    <property type="molecule type" value="Genomic_DNA"/>
</dbReference>
<dbReference type="RefSeq" id="NP_803686.1">
    <property type="nucleotide sequence ID" value="NC_004629.1"/>
</dbReference>
<dbReference type="PDB" id="8Y6V">
    <property type="method" value="EM"/>
    <property type="resolution" value="3.50 A"/>
    <property type="chains" value="A/a/b/c/d/e/f/g/h/i/j/k/l/m/n/o/p/q/r/s/t/u/v/w/x/y/z=1-747"/>
</dbReference>
<dbReference type="PDBsum" id="8Y6V"/>
<dbReference type="EMDB" id="EMD-40674"/>
<dbReference type="SMR" id="Q8SD42"/>
<dbReference type="GeneID" id="1258403"/>
<dbReference type="KEGG" id="vg:1258403"/>
<dbReference type="Proteomes" id="UP000002098">
    <property type="component" value="Genome"/>
</dbReference>
<dbReference type="GO" id="GO:0019028">
    <property type="term" value="C:viral capsid"/>
    <property type="evidence" value="ECO:0007669"/>
    <property type="project" value="UniProtKB-KW"/>
</dbReference>
<proteinExistence type="evidence at protein level"/>